<proteinExistence type="inferred from homology"/>
<feature type="chain" id="PRO_0000146897" description="Adenosylcobinamide-GDP ribazoletransferase">
    <location>
        <begin position="1"/>
        <end position="247"/>
    </location>
</feature>
<feature type="transmembrane region" description="Helical" evidence="1">
    <location>
        <begin position="34"/>
        <end position="54"/>
    </location>
</feature>
<feature type="transmembrane region" description="Helical" evidence="1">
    <location>
        <begin position="57"/>
        <end position="77"/>
    </location>
</feature>
<feature type="transmembrane region" description="Helical" evidence="1">
    <location>
        <begin position="113"/>
        <end position="133"/>
    </location>
</feature>
<feature type="transmembrane region" description="Helical" evidence="1">
    <location>
        <begin position="138"/>
        <end position="158"/>
    </location>
</feature>
<feature type="transmembrane region" description="Helical" evidence="1">
    <location>
        <begin position="194"/>
        <end position="214"/>
    </location>
</feature>
<organism>
    <name type="scientific">Shigella flexneri</name>
    <dbReference type="NCBI Taxonomy" id="623"/>
    <lineage>
        <taxon>Bacteria</taxon>
        <taxon>Pseudomonadati</taxon>
        <taxon>Pseudomonadota</taxon>
        <taxon>Gammaproteobacteria</taxon>
        <taxon>Enterobacterales</taxon>
        <taxon>Enterobacteriaceae</taxon>
        <taxon>Shigella</taxon>
    </lineage>
</organism>
<reference key="1">
    <citation type="journal article" date="2002" name="Nucleic Acids Res.">
        <title>Genome sequence of Shigella flexneri 2a: insights into pathogenicity through comparison with genomes of Escherichia coli K12 and O157.</title>
        <authorList>
            <person name="Jin Q."/>
            <person name="Yuan Z."/>
            <person name="Xu J."/>
            <person name="Wang Y."/>
            <person name="Shen Y."/>
            <person name="Lu W."/>
            <person name="Wang J."/>
            <person name="Liu H."/>
            <person name="Yang J."/>
            <person name="Yang F."/>
            <person name="Zhang X."/>
            <person name="Zhang J."/>
            <person name="Yang G."/>
            <person name="Wu H."/>
            <person name="Qu D."/>
            <person name="Dong J."/>
            <person name="Sun L."/>
            <person name="Xue Y."/>
            <person name="Zhao A."/>
            <person name="Gao Y."/>
            <person name="Zhu J."/>
            <person name="Kan B."/>
            <person name="Ding K."/>
            <person name="Chen S."/>
            <person name="Cheng H."/>
            <person name="Yao Z."/>
            <person name="He B."/>
            <person name="Chen R."/>
            <person name="Ma D."/>
            <person name="Qiang B."/>
            <person name="Wen Y."/>
            <person name="Hou Y."/>
            <person name="Yu J."/>
        </authorList>
    </citation>
    <scope>NUCLEOTIDE SEQUENCE [LARGE SCALE GENOMIC DNA]</scope>
    <source>
        <strain>301 / Serotype 2a</strain>
    </source>
</reference>
<reference key="2">
    <citation type="journal article" date="2003" name="Infect. Immun.">
        <title>Complete genome sequence and comparative genomics of Shigella flexneri serotype 2a strain 2457T.</title>
        <authorList>
            <person name="Wei J."/>
            <person name="Goldberg M.B."/>
            <person name="Burland V."/>
            <person name="Venkatesan M.M."/>
            <person name="Deng W."/>
            <person name="Fournier G."/>
            <person name="Mayhew G.F."/>
            <person name="Plunkett G. III"/>
            <person name="Rose D.J."/>
            <person name="Darling A."/>
            <person name="Mau B."/>
            <person name="Perna N.T."/>
            <person name="Payne S.M."/>
            <person name="Runyen-Janecky L.J."/>
            <person name="Zhou S."/>
            <person name="Schwartz D.C."/>
            <person name="Blattner F.R."/>
        </authorList>
    </citation>
    <scope>NUCLEOTIDE SEQUENCE [LARGE SCALE GENOMIC DNA]</scope>
    <source>
        <strain>ATCC 700930 / 2457T / Serotype 2a</strain>
    </source>
</reference>
<accession>Q83R13</accession>
<name>COBS_SHIFL</name>
<keyword id="KW-0997">Cell inner membrane</keyword>
<keyword id="KW-1003">Cell membrane</keyword>
<keyword id="KW-0169">Cobalamin biosynthesis</keyword>
<keyword id="KW-0460">Magnesium</keyword>
<keyword id="KW-0472">Membrane</keyword>
<keyword id="KW-1185">Reference proteome</keyword>
<keyword id="KW-0808">Transferase</keyword>
<keyword id="KW-0812">Transmembrane</keyword>
<keyword id="KW-1133">Transmembrane helix</keyword>
<comment type="function">
    <text evidence="1">Joins adenosylcobinamide-GDP and alpha-ribazole to generate adenosylcobalamin (Ado-cobalamin). Also synthesizes adenosylcobalamin 5'-phosphate from adenosylcobinamide-GDP and alpha-ribazole 5'-phosphate.</text>
</comment>
<comment type="catalytic activity">
    <reaction evidence="1">
        <text>alpha-ribazole + adenosylcob(III)inamide-GDP = adenosylcob(III)alamin + GMP + H(+)</text>
        <dbReference type="Rhea" id="RHEA:16049"/>
        <dbReference type="ChEBI" id="CHEBI:10329"/>
        <dbReference type="ChEBI" id="CHEBI:15378"/>
        <dbReference type="ChEBI" id="CHEBI:18408"/>
        <dbReference type="ChEBI" id="CHEBI:58115"/>
        <dbReference type="ChEBI" id="CHEBI:60487"/>
        <dbReference type="EC" id="2.7.8.26"/>
    </reaction>
</comment>
<comment type="catalytic activity">
    <reaction evidence="1">
        <text>alpha-ribazole 5'-phosphate + adenosylcob(III)inamide-GDP = adenosylcob(III)alamin 5'-phosphate + GMP + H(+)</text>
        <dbReference type="Rhea" id="RHEA:23560"/>
        <dbReference type="ChEBI" id="CHEBI:15378"/>
        <dbReference type="ChEBI" id="CHEBI:57918"/>
        <dbReference type="ChEBI" id="CHEBI:58115"/>
        <dbReference type="ChEBI" id="CHEBI:60487"/>
        <dbReference type="ChEBI" id="CHEBI:60493"/>
        <dbReference type="EC" id="2.7.8.26"/>
    </reaction>
</comment>
<comment type="cofactor">
    <cofactor evidence="1">
        <name>Mg(2+)</name>
        <dbReference type="ChEBI" id="CHEBI:18420"/>
    </cofactor>
</comment>
<comment type="pathway">
    <text evidence="1">Cofactor biosynthesis; adenosylcobalamin biosynthesis; adenosylcobalamin from cob(II)yrinate a,c-diamide: step 7/7.</text>
</comment>
<comment type="subcellular location">
    <subcellularLocation>
        <location evidence="1">Cell inner membrane</location>
        <topology evidence="1">Multi-pass membrane protein</topology>
    </subcellularLocation>
</comment>
<comment type="similarity">
    <text evidence="1">Belongs to the CobS family.</text>
</comment>
<evidence type="ECO:0000255" key="1">
    <source>
        <dbReference type="HAMAP-Rule" id="MF_00719"/>
    </source>
</evidence>
<dbReference type="EC" id="2.7.8.26" evidence="1"/>
<dbReference type="EMBL" id="AE005674">
    <property type="protein sequence ID" value="AAN43601.2"/>
    <property type="molecule type" value="Genomic_DNA"/>
</dbReference>
<dbReference type="EMBL" id="AE014073">
    <property type="protein sequence ID" value="AAP17424.1"/>
    <property type="molecule type" value="Genomic_DNA"/>
</dbReference>
<dbReference type="RefSeq" id="NP_707894.2">
    <property type="nucleotide sequence ID" value="NC_004337.2"/>
</dbReference>
<dbReference type="RefSeq" id="WP_005049317.1">
    <property type="nucleotide sequence ID" value="NZ_WPGW01000148.1"/>
</dbReference>
<dbReference type="STRING" id="198214.SF2060"/>
<dbReference type="PaxDb" id="198214-SF2060"/>
<dbReference type="GeneID" id="1026747"/>
<dbReference type="KEGG" id="sfl:SF2060"/>
<dbReference type="KEGG" id="sfx:S2170"/>
<dbReference type="PATRIC" id="fig|198214.7.peg.2466"/>
<dbReference type="HOGENOM" id="CLU_057426_1_1_6"/>
<dbReference type="UniPathway" id="UPA00148">
    <property type="reaction ID" value="UER00238"/>
</dbReference>
<dbReference type="Proteomes" id="UP000001006">
    <property type="component" value="Chromosome"/>
</dbReference>
<dbReference type="Proteomes" id="UP000002673">
    <property type="component" value="Chromosome"/>
</dbReference>
<dbReference type="GO" id="GO:0005886">
    <property type="term" value="C:plasma membrane"/>
    <property type="evidence" value="ECO:0007669"/>
    <property type="project" value="UniProtKB-SubCell"/>
</dbReference>
<dbReference type="GO" id="GO:0051073">
    <property type="term" value="F:adenosylcobinamide-GDP ribazoletransferase activity"/>
    <property type="evidence" value="ECO:0007669"/>
    <property type="project" value="UniProtKB-UniRule"/>
</dbReference>
<dbReference type="GO" id="GO:0008818">
    <property type="term" value="F:cobalamin 5'-phosphate synthase activity"/>
    <property type="evidence" value="ECO:0007669"/>
    <property type="project" value="UniProtKB-UniRule"/>
</dbReference>
<dbReference type="GO" id="GO:0009236">
    <property type="term" value="P:cobalamin biosynthetic process"/>
    <property type="evidence" value="ECO:0007669"/>
    <property type="project" value="UniProtKB-UniRule"/>
</dbReference>
<dbReference type="HAMAP" id="MF_00719">
    <property type="entry name" value="CobS"/>
    <property type="match status" value="1"/>
</dbReference>
<dbReference type="InterPro" id="IPR003805">
    <property type="entry name" value="CobS"/>
</dbReference>
<dbReference type="NCBIfam" id="TIGR00317">
    <property type="entry name" value="cobS"/>
    <property type="match status" value="1"/>
</dbReference>
<dbReference type="PANTHER" id="PTHR34148">
    <property type="entry name" value="ADENOSYLCOBINAMIDE-GDP RIBAZOLETRANSFERASE"/>
    <property type="match status" value="1"/>
</dbReference>
<dbReference type="PANTHER" id="PTHR34148:SF1">
    <property type="entry name" value="ADENOSYLCOBINAMIDE-GDP RIBAZOLETRANSFERASE"/>
    <property type="match status" value="1"/>
</dbReference>
<dbReference type="Pfam" id="PF02654">
    <property type="entry name" value="CobS"/>
    <property type="match status" value="1"/>
</dbReference>
<gene>
    <name evidence="1" type="primary">cobS</name>
    <name type="ordered locus">SF2060</name>
    <name type="ordered locus">S2170</name>
</gene>
<protein>
    <recommendedName>
        <fullName evidence="1">Adenosylcobinamide-GDP ribazoletransferase</fullName>
        <ecNumber evidence="1">2.7.8.26</ecNumber>
    </recommendedName>
    <alternativeName>
        <fullName evidence="1">Cobalamin synthase</fullName>
    </alternativeName>
    <alternativeName>
        <fullName evidence="1">Cobalamin-5'-phosphate synthase</fullName>
    </alternativeName>
</protein>
<sequence>MSKLFWAMLSFITRLPVPRRWSQGLDFEHYSRGIITFPLIGLLLGAISGLVFMVLQAWCGAPLAALFSVLVLALMTGEFHLDGLADTCDGVFSARSRDRMLEIMRDSRLGTHGGLALIFVVLAKILVLSELALRGEPILASLAAACAVSRGTAALLMYRHRYAREEGLGNVFIGKIDGRQTCVTLGLAAIFAAVLLLGMHGVAAMVVTMVAIFILGQLLKRTLGGQTGDTLGAAIELGELVFLLALL</sequence>